<accession>B1Y3S9</accession>
<proteinExistence type="inferred from homology"/>
<feature type="chain" id="PRO_1000143402" description="ATP synthase subunit alpha">
    <location>
        <begin position="1"/>
        <end position="512"/>
    </location>
</feature>
<feature type="binding site" evidence="1">
    <location>
        <begin position="169"/>
        <end position="176"/>
    </location>
    <ligand>
        <name>ATP</name>
        <dbReference type="ChEBI" id="CHEBI:30616"/>
    </ligand>
</feature>
<feature type="site" description="Required for activity" evidence="1">
    <location>
        <position position="373"/>
    </location>
</feature>
<protein>
    <recommendedName>
        <fullName evidence="1">ATP synthase subunit alpha</fullName>
        <ecNumber evidence="1">7.1.2.2</ecNumber>
    </recommendedName>
    <alternativeName>
        <fullName evidence="1">ATP synthase F1 sector subunit alpha</fullName>
    </alternativeName>
    <alternativeName>
        <fullName evidence="1">F-ATPase subunit alpha</fullName>
    </alternativeName>
</protein>
<evidence type="ECO:0000255" key="1">
    <source>
        <dbReference type="HAMAP-Rule" id="MF_01346"/>
    </source>
</evidence>
<sequence>MQLNPAEISELIKSRIEGLGAATDVRNQGTVVSVTDGIVRVHGLSDAMAGEMLEFPGNVFGLALNLERDSVGAVILGEYEGISEGDTVRCTGRILEVPVGPELIGRVVNALGQPIDGKGPINAKMTDVIEKVAPGVIARKSVDQPVQTGLKSIDSMVPIGRGQRELIIGDRQTGKTAVAIDAIINQKGQNMTCVYVAIGQKASSIKNVVRALEQAGAMEYTIVVAASASESAAMQYISAYTGCTMGEYFRDRGEDALIVYDDLSKQAVAYRQVSLLLRRPPGREAFPGDVFYLHSRLLERAARVNADYVEAFTKGAVKGKTGSLTALPVIETQAGDVSAFVPTNVISITDGQIFLETSLFNAGIRPAINAGISVSRVGGAAQTKLIKGLSGGIRTDLAQYRELAAFAQFASDLDASTRKQLDRGARVTELLKQAQYSPQPISLMGATLYAVNKGYLDDIEVKKVLAFESGMHQYLKTSHAALLQKLETTKALDKDAEAELQGAIAAFKKSFA</sequence>
<organism>
    <name type="scientific">Leptothrix cholodnii (strain ATCC 51168 / LMG 8142 / SP-6)</name>
    <name type="common">Leptothrix discophora (strain SP-6)</name>
    <dbReference type="NCBI Taxonomy" id="395495"/>
    <lineage>
        <taxon>Bacteria</taxon>
        <taxon>Pseudomonadati</taxon>
        <taxon>Pseudomonadota</taxon>
        <taxon>Betaproteobacteria</taxon>
        <taxon>Burkholderiales</taxon>
        <taxon>Sphaerotilaceae</taxon>
        <taxon>Leptothrix</taxon>
    </lineage>
</organism>
<gene>
    <name evidence="1" type="primary">atpA</name>
    <name type="ordered locus">Lcho_3528</name>
</gene>
<keyword id="KW-0066">ATP synthesis</keyword>
<keyword id="KW-0067">ATP-binding</keyword>
<keyword id="KW-0997">Cell inner membrane</keyword>
<keyword id="KW-1003">Cell membrane</keyword>
<keyword id="KW-0139">CF(1)</keyword>
<keyword id="KW-0375">Hydrogen ion transport</keyword>
<keyword id="KW-0406">Ion transport</keyword>
<keyword id="KW-0472">Membrane</keyword>
<keyword id="KW-0547">Nucleotide-binding</keyword>
<keyword id="KW-1185">Reference proteome</keyword>
<keyword id="KW-1278">Translocase</keyword>
<keyword id="KW-0813">Transport</keyword>
<name>ATPA_LEPCP</name>
<reference key="1">
    <citation type="submission" date="2008-03" db="EMBL/GenBank/DDBJ databases">
        <title>Complete sequence of Leptothrix cholodnii SP-6.</title>
        <authorList>
            <consortium name="US DOE Joint Genome Institute"/>
            <person name="Copeland A."/>
            <person name="Lucas S."/>
            <person name="Lapidus A."/>
            <person name="Glavina del Rio T."/>
            <person name="Dalin E."/>
            <person name="Tice H."/>
            <person name="Bruce D."/>
            <person name="Goodwin L."/>
            <person name="Pitluck S."/>
            <person name="Chertkov O."/>
            <person name="Brettin T."/>
            <person name="Detter J.C."/>
            <person name="Han C."/>
            <person name="Kuske C.R."/>
            <person name="Schmutz J."/>
            <person name="Larimer F."/>
            <person name="Land M."/>
            <person name="Hauser L."/>
            <person name="Kyrpides N."/>
            <person name="Lykidis A."/>
            <person name="Emerson D."/>
            <person name="Richardson P."/>
        </authorList>
    </citation>
    <scope>NUCLEOTIDE SEQUENCE [LARGE SCALE GENOMIC DNA]</scope>
    <source>
        <strain>ATCC 51168 / LMG 8142 / SP-6</strain>
    </source>
</reference>
<comment type="function">
    <text evidence="1">Produces ATP from ADP in the presence of a proton gradient across the membrane. The alpha chain is a regulatory subunit.</text>
</comment>
<comment type="catalytic activity">
    <reaction evidence="1">
        <text>ATP + H2O + 4 H(+)(in) = ADP + phosphate + 5 H(+)(out)</text>
        <dbReference type="Rhea" id="RHEA:57720"/>
        <dbReference type="ChEBI" id="CHEBI:15377"/>
        <dbReference type="ChEBI" id="CHEBI:15378"/>
        <dbReference type="ChEBI" id="CHEBI:30616"/>
        <dbReference type="ChEBI" id="CHEBI:43474"/>
        <dbReference type="ChEBI" id="CHEBI:456216"/>
        <dbReference type="EC" id="7.1.2.2"/>
    </reaction>
</comment>
<comment type="subunit">
    <text evidence="1">F-type ATPases have 2 components, CF(1) - the catalytic core - and CF(0) - the membrane proton channel. CF(1) has five subunits: alpha(3), beta(3), gamma(1), delta(1), epsilon(1). CF(0) has three main subunits: a(1), b(2) and c(9-12). The alpha and beta chains form an alternating ring which encloses part of the gamma chain. CF(1) is attached to CF(0) by a central stalk formed by the gamma and epsilon chains, while a peripheral stalk is formed by the delta and b chains.</text>
</comment>
<comment type="subcellular location">
    <subcellularLocation>
        <location evidence="1">Cell inner membrane</location>
        <topology evidence="1">Peripheral membrane protein</topology>
    </subcellularLocation>
</comment>
<comment type="similarity">
    <text evidence="1">Belongs to the ATPase alpha/beta chains family.</text>
</comment>
<dbReference type="EC" id="7.1.2.2" evidence="1"/>
<dbReference type="EMBL" id="CP001013">
    <property type="protein sequence ID" value="ACB35782.1"/>
    <property type="molecule type" value="Genomic_DNA"/>
</dbReference>
<dbReference type="RefSeq" id="WP_012348529.1">
    <property type="nucleotide sequence ID" value="NC_010524.1"/>
</dbReference>
<dbReference type="SMR" id="B1Y3S9"/>
<dbReference type="STRING" id="395495.Lcho_3528"/>
<dbReference type="KEGG" id="lch:Lcho_3528"/>
<dbReference type="eggNOG" id="COG0056">
    <property type="taxonomic scope" value="Bacteria"/>
</dbReference>
<dbReference type="HOGENOM" id="CLU_010091_2_1_4"/>
<dbReference type="OrthoDB" id="9803053at2"/>
<dbReference type="Proteomes" id="UP000001693">
    <property type="component" value="Chromosome"/>
</dbReference>
<dbReference type="GO" id="GO:0005886">
    <property type="term" value="C:plasma membrane"/>
    <property type="evidence" value="ECO:0007669"/>
    <property type="project" value="UniProtKB-SubCell"/>
</dbReference>
<dbReference type="GO" id="GO:0045259">
    <property type="term" value="C:proton-transporting ATP synthase complex"/>
    <property type="evidence" value="ECO:0007669"/>
    <property type="project" value="UniProtKB-KW"/>
</dbReference>
<dbReference type="GO" id="GO:0043531">
    <property type="term" value="F:ADP binding"/>
    <property type="evidence" value="ECO:0007669"/>
    <property type="project" value="TreeGrafter"/>
</dbReference>
<dbReference type="GO" id="GO:0005524">
    <property type="term" value="F:ATP binding"/>
    <property type="evidence" value="ECO:0007669"/>
    <property type="project" value="UniProtKB-UniRule"/>
</dbReference>
<dbReference type="GO" id="GO:0046933">
    <property type="term" value="F:proton-transporting ATP synthase activity, rotational mechanism"/>
    <property type="evidence" value="ECO:0007669"/>
    <property type="project" value="UniProtKB-UniRule"/>
</dbReference>
<dbReference type="CDD" id="cd18113">
    <property type="entry name" value="ATP-synt_F1_alpha_C"/>
    <property type="match status" value="1"/>
</dbReference>
<dbReference type="CDD" id="cd18116">
    <property type="entry name" value="ATP-synt_F1_alpha_N"/>
    <property type="match status" value="1"/>
</dbReference>
<dbReference type="CDD" id="cd01132">
    <property type="entry name" value="F1-ATPase_alpha_CD"/>
    <property type="match status" value="1"/>
</dbReference>
<dbReference type="FunFam" id="1.20.150.20:FF:000001">
    <property type="entry name" value="ATP synthase subunit alpha"/>
    <property type="match status" value="1"/>
</dbReference>
<dbReference type="FunFam" id="2.40.30.20:FF:000001">
    <property type="entry name" value="ATP synthase subunit alpha"/>
    <property type="match status" value="1"/>
</dbReference>
<dbReference type="FunFam" id="3.40.50.300:FF:000002">
    <property type="entry name" value="ATP synthase subunit alpha"/>
    <property type="match status" value="1"/>
</dbReference>
<dbReference type="Gene3D" id="2.40.30.20">
    <property type="match status" value="1"/>
</dbReference>
<dbReference type="Gene3D" id="1.20.150.20">
    <property type="entry name" value="ATP synthase alpha/beta chain, C-terminal domain"/>
    <property type="match status" value="1"/>
</dbReference>
<dbReference type="Gene3D" id="3.40.50.300">
    <property type="entry name" value="P-loop containing nucleotide triphosphate hydrolases"/>
    <property type="match status" value="1"/>
</dbReference>
<dbReference type="HAMAP" id="MF_01346">
    <property type="entry name" value="ATP_synth_alpha_bact"/>
    <property type="match status" value="1"/>
</dbReference>
<dbReference type="InterPro" id="IPR023366">
    <property type="entry name" value="ATP_synth_asu-like_sf"/>
</dbReference>
<dbReference type="InterPro" id="IPR000793">
    <property type="entry name" value="ATP_synth_asu_C"/>
</dbReference>
<dbReference type="InterPro" id="IPR038376">
    <property type="entry name" value="ATP_synth_asu_C_sf"/>
</dbReference>
<dbReference type="InterPro" id="IPR033732">
    <property type="entry name" value="ATP_synth_F1_a_nt-bd_dom"/>
</dbReference>
<dbReference type="InterPro" id="IPR005294">
    <property type="entry name" value="ATP_synth_F1_asu"/>
</dbReference>
<dbReference type="InterPro" id="IPR020003">
    <property type="entry name" value="ATPase_a/bsu_AS"/>
</dbReference>
<dbReference type="InterPro" id="IPR004100">
    <property type="entry name" value="ATPase_F1/V1/A1_a/bsu_N"/>
</dbReference>
<dbReference type="InterPro" id="IPR036121">
    <property type="entry name" value="ATPase_F1/V1/A1_a/bsu_N_sf"/>
</dbReference>
<dbReference type="InterPro" id="IPR000194">
    <property type="entry name" value="ATPase_F1/V1/A1_a/bsu_nucl-bd"/>
</dbReference>
<dbReference type="InterPro" id="IPR027417">
    <property type="entry name" value="P-loop_NTPase"/>
</dbReference>
<dbReference type="NCBIfam" id="TIGR00962">
    <property type="entry name" value="atpA"/>
    <property type="match status" value="1"/>
</dbReference>
<dbReference type="NCBIfam" id="NF009884">
    <property type="entry name" value="PRK13343.1"/>
    <property type="match status" value="1"/>
</dbReference>
<dbReference type="PANTHER" id="PTHR48082">
    <property type="entry name" value="ATP SYNTHASE SUBUNIT ALPHA, MITOCHONDRIAL"/>
    <property type="match status" value="1"/>
</dbReference>
<dbReference type="PANTHER" id="PTHR48082:SF2">
    <property type="entry name" value="ATP SYNTHASE SUBUNIT ALPHA, MITOCHONDRIAL"/>
    <property type="match status" value="1"/>
</dbReference>
<dbReference type="Pfam" id="PF00006">
    <property type="entry name" value="ATP-synt_ab"/>
    <property type="match status" value="1"/>
</dbReference>
<dbReference type="Pfam" id="PF00306">
    <property type="entry name" value="ATP-synt_ab_C"/>
    <property type="match status" value="1"/>
</dbReference>
<dbReference type="Pfam" id="PF02874">
    <property type="entry name" value="ATP-synt_ab_N"/>
    <property type="match status" value="1"/>
</dbReference>
<dbReference type="PIRSF" id="PIRSF039088">
    <property type="entry name" value="F_ATPase_subunit_alpha"/>
    <property type="match status" value="1"/>
</dbReference>
<dbReference type="SUPFAM" id="SSF47917">
    <property type="entry name" value="C-terminal domain of alpha and beta subunits of F1 ATP synthase"/>
    <property type="match status" value="1"/>
</dbReference>
<dbReference type="SUPFAM" id="SSF50615">
    <property type="entry name" value="N-terminal domain of alpha and beta subunits of F1 ATP synthase"/>
    <property type="match status" value="1"/>
</dbReference>
<dbReference type="SUPFAM" id="SSF52540">
    <property type="entry name" value="P-loop containing nucleoside triphosphate hydrolases"/>
    <property type="match status" value="1"/>
</dbReference>
<dbReference type="PROSITE" id="PS00152">
    <property type="entry name" value="ATPASE_ALPHA_BETA"/>
    <property type="match status" value="1"/>
</dbReference>